<dbReference type="EC" id="4.2.3.-" evidence="5"/>
<dbReference type="EC" id="2.5.1.29" evidence="5"/>
<dbReference type="EC" id="2.5.1.81" evidence="5"/>
<dbReference type="EMBL" id="LC113889">
    <property type="protein sequence ID" value="BAU98235.1"/>
    <property type="molecule type" value="Genomic_DNA"/>
</dbReference>
<dbReference type="SMR" id="A0A169T193"/>
<dbReference type="UniPathway" id="UPA00213"/>
<dbReference type="GO" id="GO:0016829">
    <property type="term" value="F:lyase activity"/>
    <property type="evidence" value="ECO:0007669"/>
    <property type="project" value="UniProtKB-KW"/>
</dbReference>
<dbReference type="GO" id="GO:0046872">
    <property type="term" value="F:metal ion binding"/>
    <property type="evidence" value="ECO:0007669"/>
    <property type="project" value="UniProtKB-KW"/>
</dbReference>
<dbReference type="GO" id="GO:0004659">
    <property type="term" value="F:prenyltransferase activity"/>
    <property type="evidence" value="ECO:0007669"/>
    <property type="project" value="InterPro"/>
</dbReference>
<dbReference type="GO" id="GO:0046165">
    <property type="term" value="P:alcohol biosynthetic process"/>
    <property type="evidence" value="ECO:0007669"/>
    <property type="project" value="UniProtKB-ARBA"/>
</dbReference>
<dbReference type="GO" id="GO:0043386">
    <property type="term" value="P:mycotoxin biosynthetic process"/>
    <property type="evidence" value="ECO:0007669"/>
    <property type="project" value="UniProtKB-ARBA"/>
</dbReference>
<dbReference type="GO" id="GO:0016114">
    <property type="term" value="P:terpenoid biosynthetic process"/>
    <property type="evidence" value="ECO:0007669"/>
    <property type="project" value="UniProtKB-UniPathway"/>
</dbReference>
<dbReference type="CDD" id="cd00685">
    <property type="entry name" value="Trans_IPPS_HT"/>
    <property type="match status" value="1"/>
</dbReference>
<dbReference type="Gene3D" id="1.10.600.10">
    <property type="entry name" value="Farnesyl Diphosphate Synthase"/>
    <property type="match status" value="2"/>
</dbReference>
<dbReference type="InterPro" id="IPR008949">
    <property type="entry name" value="Isoprenoid_synthase_dom_sf"/>
</dbReference>
<dbReference type="InterPro" id="IPR000092">
    <property type="entry name" value="Polyprenyl_synt"/>
</dbReference>
<dbReference type="InterPro" id="IPR033749">
    <property type="entry name" value="Polyprenyl_synt_CS"/>
</dbReference>
<dbReference type="PANTHER" id="PTHR12001">
    <property type="entry name" value="GERANYLGERANYL PYROPHOSPHATE SYNTHASE"/>
    <property type="match status" value="1"/>
</dbReference>
<dbReference type="PANTHER" id="PTHR12001:SF72">
    <property type="entry name" value="THIJ_PFPI FAMILY PROTEIN (AFU_ORTHOLOGUE AFUA_3G01210)-RELATED"/>
    <property type="match status" value="1"/>
</dbReference>
<dbReference type="Pfam" id="PF00348">
    <property type="entry name" value="polyprenyl_synt"/>
    <property type="match status" value="1"/>
</dbReference>
<dbReference type="Pfam" id="PF19086">
    <property type="entry name" value="Terpene_syn_C_2"/>
    <property type="match status" value="1"/>
</dbReference>
<dbReference type="SFLD" id="SFLDS00005">
    <property type="entry name" value="Isoprenoid_Synthase_Type_I"/>
    <property type="match status" value="1"/>
</dbReference>
<dbReference type="SUPFAM" id="SSF48576">
    <property type="entry name" value="Terpenoid synthases"/>
    <property type="match status" value="2"/>
</dbReference>
<dbReference type="PROSITE" id="PS00723">
    <property type="entry name" value="POLYPRENYL_SYNTHASE_1"/>
    <property type="match status" value="1"/>
</dbReference>
<proteinExistence type="evidence at protein level"/>
<comment type="function">
    <text evidence="5">Bifunctional terpene synthase that converts dimethylallyl diphosphate (DMAPP) and isopentenyl diphosphate (IPP) into astellifadiene (PubMed:27038368). The C-terminal prenyltransferase (PT) domain of EvAS catalyzes formation of geranylfarnesyl pyrophosphate (GFPP), whereas the N-terminal terpene cyclase (TC) domain catalyzes the cyclization of GFPP to astellifadiene (PubMed:27038368).</text>
</comment>
<comment type="catalytic activity">
    <reaction evidence="5">
        <text>isopentenyl diphosphate + (2E,6E)-farnesyl diphosphate = (2E,6E,10E)-geranylgeranyl diphosphate + diphosphate</text>
        <dbReference type="Rhea" id="RHEA:17653"/>
        <dbReference type="ChEBI" id="CHEBI:33019"/>
        <dbReference type="ChEBI" id="CHEBI:58756"/>
        <dbReference type="ChEBI" id="CHEBI:128769"/>
        <dbReference type="ChEBI" id="CHEBI:175763"/>
        <dbReference type="EC" id="2.5.1.29"/>
    </reaction>
    <physiologicalReaction direction="left-to-right" evidence="5">
        <dbReference type="Rhea" id="RHEA:17654"/>
    </physiologicalReaction>
</comment>
<comment type="catalytic activity">
    <reaction evidence="5">
        <text>isopentenyl diphosphate + (2E,6E,10E)-geranylgeranyl diphosphate = (2E,6E,10E,14E)-geranylfarnesyl diphosphate + diphosphate</text>
        <dbReference type="Rhea" id="RHEA:25694"/>
        <dbReference type="ChEBI" id="CHEBI:33019"/>
        <dbReference type="ChEBI" id="CHEBI:57907"/>
        <dbReference type="ChEBI" id="CHEBI:58756"/>
        <dbReference type="ChEBI" id="CHEBI:128769"/>
        <dbReference type="EC" id="2.5.1.81"/>
    </reaction>
    <physiologicalReaction direction="left-to-right" evidence="5">
        <dbReference type="Rhea" id="RHEA:25695"/>
    </physiologicalReaction>
</comment>
<comment type="catalytic activity">
    <reaction evidence="5">
        <text>(2E,6E,10E,14E)-geranylfarnesyl diphosphate = astellifadiene + diphosphate</text>
        <dbReference type="Rhea" id="RHEA:78399"/>
        <dbReference type="ChEBI" id="CHEBI:33019"/>
        <dbReference type="ChEBI" id="CHEBI:57907"/>
        <dbReference type="ChEBI" id="CHEBI:172939"/>
    </reaction>
    <physiologicalReaction direction="left-to-right" evidence="5">
        <dbReference type="Rhea" id="RHEA:78400"/>
    </physiologicalReaction>
</comment>
<comment type="cofactor">
    <cofactor evidence="2">
        <name>Mg(2+)</name>
        <dbReference type="ChEBI" id="CHEBI:18420"/>
    </cofactor>
</comment>
<comment type="pathway">
    <text evidence="5">Secondary metabolite biosynthesis; terpenoid biosynthesis.</text>
</comment>
<comment type="subunit">
    <text evidence="1">Hexamer.</text>
</comment>
<comment type="domain">
    <text evidence="8">The conserved DDXXD motifs as well as the NSE/DTE motif are important for the catalytic activity, presumably through binding to Mg(2+).</text>
</comment>
<comment type="similarity">
    <text evidence="7">In the N-terminal section; belongs to the terpene synthase family.</text>
</comment>
<comment type="similarity">
    <text evidence="7">In the C-terminal section; belongs to the FPP/GGPP synthase family.</text>
</comment>
<sequence length="716" mass="82058">MEFKYSTLIDPEMYETEGLCDGIPVRYHNNPELEEIDCLRCHEHWRENVGPLGVYKGGLADQWNGISIAIPEALPDRLGVVSYASEFAFVHDDVIDIAQHGNEQNDDLRVGFEQMIDAGAIKYSTSGKRALQSYIAKRMLSIDRERAIISLRAWLEFIEKTGRQEERRFNNEKEFLKYRIYDVGMLFWYGLLTFAQKITIPENELTTCHELAIPAYRHMALLNDLVSWEKERASSIALGKDYCINFIFVAMEESGISEDEAKERCREEIKLATVDYLRVFDEAKDRIDLSHDTMLYLESLLYSMSGNVVWGLQSPRYYTDAKFSQRQLDWIKNGLPLEVRLEDRVFGLSPSEDRVTHQAVIENGLPESGLGKNGNSSNGVDVNKALLSAVLHEHLKGHAVFKMSDHEVKVKASNGRSLDTKVLQAPYEYITGLPSKRLREQAIDAMNVWFRVPAEKLDLIKSITTILHNASLMLDDVEDGSELRRGNPSTHTIFGLSQTINSANYQLVRALERVQKLEDSESLLVFTEELRNLYIGQSMDLYWTGNLICPTMNEYFHMVECKTGGLFRLFTRLMSLHSTSAVKVDPTTLSTRLGIYFQTRDDYKNLVSTEYTKQKGYCEDLEEGKFSLPLIHLIQAMPDNHVLRNILTQWRVTRKVTLAQKQVVLGLMEKSGSLKFTRETLASLYSGLEKSFTELEEKFGTENFQLKLILQFLRTE</sequence>
<organism>
    <name type="scientific">Emericella variicolor</name>
    <name type="common">Aspergillus stellatus</name>
    <dbReference type="NCBI Taxonomy" id="1549217"/>
    <lineage>
        <taxon>Eukaryota</taxon>
        <taxon>Fungi</taxon>
        <taxon>Dikarya</taxon>
        <taxon>Ascomycota</taxon>
        <taxon>Pezizomycotina</taxon>
        <taxon>Eurotiomycetes</taxon>
        <taxon>Eurotiomycetidae</taxon>
        <taxon>Eurotiales</taxon>
        <taxon>Aspergillaceae</taxon>
        <taxon>Aspergillus</taxon>
        <taxon>Aspergillus subgen. Nidulantes</taxon>
    </lineage>
</organism>
<keyword id="KW-0414">Isoprene biosynthesis</keyword>
<keyword id="KW-0456">Lyase</keyword>
<keyword id="KW-0460">Magnesium</keyword>
<keyword id="KW-0479">Metal-binding</keyword>
<keyword id="KW-0511">Multifunctional enzyme</keyword>
<keyword id="KW-0677">Repeat</keyword>
<keyword id="KW-0808">Transferase</keyword>
<reference key="1">
    <citation type="journal article" date="2016" name="Angew. Chem. Int. Ed.">
        <title>Astellifadiene: structure determination by NMR spectroscopy and crystalline sponge method, and elucidation of its biosynthesis.</title>
        <authorList>
            <person name="Matsuda Y."/>
            <person name="Mitsuhashi T."/>
            <person name="Lee S."/>
            <person name="Hoshino M."/>
            <person name="Mori T."/>
            <person name="Okada M."/>
            <person name="Zhang H."/>
            <person name="Hayashi F."/>
            <person name="Fujita M."/>
            <person name="Abe I."/>
        </authorList>
    </citation>
    <scope>NUCLEOTIDE SEQUENCE [GENOMIC DNA]</scope>
    <scope>FUNCTION</scope>
    <scope>DOMAIN</scope>
    <scope>CATALYTIC ACTIVITY</scope>
    <scope>PATHWAY</scope>
    <source>
        <strain>ATCC 12069 / CBS 136.55 / IMI 60316 / NBRC 32302</strain>
    </source>
</reference>
<protein>
    <recommendedName>
        <fullName evidence="6">Astellifadiene synthase</fullName>
        <shortName evidence="6">SS</shortName>
    </recommendedName>
    <domain>
        <recommendedName>
            <fullName evidence="6">Terpene cyclase</fullName>
            <ecNumber evidence="5">4.2.3.-</ecNumber>
        </recommendedName>
    </domain>
    <domain>
        <recommendedName>
            <fullName evidence="6">Geranylgeranyl diphosphate synthase</fullName>
            <shortName evidence="6">GGDP synthase</shortName>
            <shortName evidence="6">GGS</shortName>
            <ecNumber evidence="5">2.5.1.29</ecNumber>
        </recommendedName>
    </domain>
    <domain>
        <recommendedName>
            <fullName>Geranylfarnesyl diphosphate synthase</fullName>
            <shortName evidence="6">GFDP synthase</shortName>
            <ecNumber evidence="5">2.5.1.81</ecNumber>
        </recommendedName>
    </domain>
</protein>
<feature type="chain" id="PRO_0000453640" description="Astellifadiene synthase">
    <location>
        <begin position="1"/>
        <end position="716"/>
    </location>
</feature>
<feature type="region of interest" description="Terpene cyclase" evidence="8">
    <location>
        <begin position="1"/>
        <end position="323"/>
    </location>
</feature>
<feature type="region of interest" description="Prenyltransferase" evidence="8">
    <location>
        <begin position="324"/>
        <end position="713"/>
    </location>
</feature>
<feature type="short sequence motif" description="DDXXD 1" evidence="8">
    <location>
        <begin position="92"/>
        <end position="96"/>
    </location>
</feature>
<feature type="short sequence motif" description="NSE/DTE" evidence="8">
    <location>
        <begin position="223"/>
        <end position="231"/>
    </location>
</feature>
<feature type="short sequence motif" description="DDXXD 2" evidence="8">
    <location>
        <begin position="475"/>
        <end position="479"/>
    </location>
</feature>
<feature type="binding site" evidence="4">
    <location>
        <position position="92"/>
    </location>
    <ligand>
        <name>Mg(2+)</name>
        <dbReference type="ChEBI" id="CHEBI:18420"/>
        <label>1</label>
    </ligand>
</feature>
<feature type="binding site" evidence="4">
    <location>
        <position position="92"/>
    </location>
    <ligand>
        <name>Mg(2+)</name>
        <dbReference type="ChEBI" id="CHEBI:18420"/>
        <label>2</label>
    </ligand>
</feature>
<feature type="binding site" evidence="1">
    <location>
        <position position="92"/>
    </location>
    <ligand>
        <name>substrate</name>
    </ligand>
</feature>
<feature type="binding site" evidence="1">
    <location>
        <begin position="179"/>
        <end position="182"/>
    </location>
    <ligand>
        <name>substrate</name>
    </ligand>
</feature>
<feature type="binding site" evidence="1">
    <location>
        <position position="223"/>
    </location>
    <ligand>
        <name>substrate</name>
    </ligand>
</feature>
<feature type="binding site" evidence="1">
    <location>
        <begin position="227"/>
        <end position="231"/>
    </location>
    <ligand>
        <name>substrate</name>
    </ligand>
</feature>
<feature type="binding site" evidence="1">
    <location>
        <begin position="316"/>
        <end position="317"/>
    </location>
    <ligand>
        <name>substrate</name>
    </ligand>
</feature>
<feature type="binding site" evidence="3">
    <location>
        <position position="436"/>
    </location>
    <ligand>
        <name>isopentenyl diphosphate</name>
        <dbReference type="ChEBI" id="CHEBI:128769"/>
    </ligand>
</feature>
<feature type="binding site" evidence="3">
    <location>
        <position position="439"/>
    </location>
    <ligand>
        <name>isopentenyl diphosphate</name>
        <dbReference type="ChEBI" id="CHEBI:128769"/>
    </ligand>
</feature>
<feature type="binding site" evidence="3">
    <location>
        <position position="468"/>
    </location>
    <ligand>
        <name>isopentenyl diphosphate</name>
        <dbReference type="ChEBI" id="CHEBI:128769"/>
    </ligand>
</feature>
<feature type="binding site" evidence="3">
    <location>
        <position position="475"/>
    </location>
    <ligand>
        <name>Mg(2+)</name>
        <dbReference type="ChEBI" id="CHEBI:18420"/>
        <label>3</label>
    </ligand>
</feature>
<feature type="binding site" evidence="3">
    <location>
        <position position="475"/>
    </location>
    <ligand>
        <name>Mg(2+)</name>
        <dbReference type="ChEBI" id="CHEBI:18420"/>
        <label>4</label>
    </ligand>
</feature>
<feature type="binding site" evidence="3">
    <location>
        <position position="479"/>
    </location>
    <ligand>
        <name>Mg(2+)</name>
        <dbReference type="ChEBI" id="CHEBI:18420"/>
        <label>3</label>
    </ligand>
</feature>
<feature type="binding site" evidence="3">
    <location>
        <position position="479"/>
    </location>
    <ligand>
        <name>Mg(2+)</name>
        <dbReference type="ChEBI" id="CHEBI:18420"/>
        <label>4</label>
    </ligand>
</feature>
<feature type="binding site" evidence="3">
    <location>
        <position position="484"/>
    </location>
    <ligand>
        <name>dimethylallyl diphosphate</name>
        <dbReference type="ChEBI" id="CHEBI:57623"/>
    </ligand>
</feature>
<feature type="binding site" evidence="3">
    <location>
        <position position="485"/>
    </location>
    <ligand>
        <name>isopentenyl diphosphate</name>
        <dbReference type="ChEBI" id="CHEBI:128769"/>
    </ligand>
</feature>
<feature type="binding site" evidence="3">
    <location>
        <position position="562"/>
    </location>
    <ligand>
        <name>dimethylallyl diphosphate</name>
        <dbReference type="ChEBI" id="CHEBI:57623"/>
    </ligand>
</feature>
<feature type="binding site" evidence="3">
    <location>
        <position position="563"/>
    </location>
    <ligand>
        <name>dimethylallyl diphosphate</name>
        <dbReference type="ChEBI" id="CHEBI:57623"/>
    </ligand>
</feature>
<feature type="binding site" evidence="3">
    <location>
        <position position="598"/>
    </location>
    <ligand>
        <name>dimethylallyl diphosphate</name>
        <dbReference type="ChEBI" id="CHEBI:57623"/>
    </ligand>
</feature>
<feature type="binding site" evidence="3">
    <location>
        <position position="605"/>
    </location>
    <ligand>
        <name>dimethylallyl diphosphate</name>
        <dbReference type="ChEBI" id="CHEBI:57623"/>
    </ligand>
</feature>
<feature type="binding site" evidence="3">
    <location>
        <position position="615"/>
    </location>
    <ligand>
        <name>dimethylallyl diphosphate</name>
        <dbReference type="ChEBI" id="CHEBI:57623"/>
    </ligand>
</feature>
<feature type="binding site" evidence="3">
    <location>
        <position position="625"/>
    </location>
    <ligand>
        <name>dimethylallyl diphosphate</name>
        <dbReference type="ChEBI" id="CHEBI:57623"/>
    </ligand>
</feature>
<accession>A0A169T193</accession>
<gene>
    <name evidence="6" type="primary">EvAS</name>
</gene>
<name>EVAS_EMEVA</name>
<evidence type="ECO:0000250" key="1">
    <source>
        <dbReference type="UniProtKB" id="A2PZA5"/>
    </source>
</evidence>
<evidence type="ECO:0000250" key="2">
    <source>
        <dbReference type="UniProtKB" id="P9WEV7"/>
    </source>
</evidence>
<evidence type="ECO:0000250" key="3">
    <source>
        <dbReference type="UniProtKB" id="Q12051"/>
    </source>
</evidence>
<evidence type="ECO:0000250" key="4">
    <source>
        <dbReference type="UniProtKB" id="Q40577"/>
    </source>
</evidence>
<evidence type="ECO:0000269" key="5">
    <source>
    </source>
</evidence>
<evidence type="ECO:0000303" key="6">
    <source>
    </source>
</evidence>
<evidence type="ECO:0000305" key="7"/>
<evidence type="ECO:0000305" key="8">
    <source>
    </source>
</evidence>